<proteinExistence type="evidence at transcript level"/>
<dbReference type="EMBL" id="U26448">
    <property type="protein sequence ID" value="AAA99139.1"/>
    <property type="molecule type" value="mRNA"/>
</dbReference>
<dbReference type="SMR" id="Q24789"/>
<dbReference type="OrthoDB" id="2401965at2759"/>
<dbReference type="Proteomes" id="UP000492820">
    <property type="component" value="Unplaced"/>
</dbReference>
<dbReference type="GO" id="GO:0005524">
    <property type="term" value="F:ATP binding"/>
    <property type="evidence" value="ECO:0007669"/>
    <property type="project" value="UniProtKB-KW"/>
</dbReference>
<dbReference type="GO" id="GO:0140662">
    <property type="term" value="F:ATP-dependent protein folding chaperone"/>
    <property type="evidence" value="ECO:0007669"/>
    <property type="project" value="InterPro"/>
</dbReference>
<dbReference type="CDD" id="cd10233">
    <property type="entry name" value="ASKHA_NBD_HSP70_HSPA1"/>
    <property type="match status" value="1"/>
</dbReference>
<dbReference type="FunFam" id="2.60.34.10:FF:000002">
    <property type="entry name" value="Heat shock 70 kDa"/>
    <property type="match status" value="1"/>
</dbReference>
<dbReference type="FunFam" id="3.30.420.40:FF:000172">
    <property type="entry name" value="Heat shock 70 kDa protein"/>
    <property type="match status" value="1"/>
</dbReference>
<dbReference type="FunFam" id="3.30.30.30:FF:000001">
    <property type="entry name" value="heat shock 70 kDa protein-like"/>
    <property type="match status" value="1"/>
</dbReference>
<dbReference type="FunFam" id="3.30.420.40:FF:000135">
    <property type="entry name" value="Heat shock cognate 71 kDa protein"/>
    <property type="match status" value="1"/>
</dbReference>
<dbReference type="FunFam" id="3.90.640.10:FF:000134">
    <property type="entry name" value="Heat shock cognate 71 kDa protein"/>
    <property type="match status" value="1"/>
</dbReference>
<dbReference type="FunFam" id="1.20.1270.10:FF:000003">
    <property type="entry name" value="heat shock cognate 71 kDa protein-like"/>
    <property type="match status" value="1"/>
</dbReference>
<dbReference type="FunFam" id="3.30.420.40:FF:000026">
    <property type="entry name" value="Heat shock protein 70"/>
    <property type="match status" value="1"/>
</dbReference>
<dbReference type="Gene3D" id="1.20.1270.10">
    <property type="match status" value="1"/>
</dbReference>
<dbReference type="Gene3D" id="3.30.30.30">
    <property type="match status" value="1"/>
</dbReference>
<dbReference type="Gene3D" id="3.30.420.40">
    <property type="match status" value="2"/>
</dbReference>
<dbReference type="Gene3D" id="3.90.640.10">
    <property type="entry name" value="Actin, Chain A, domain 4"/>
    <property type="match status" value="1"/>
</dbReference>
<dbReference type="Gene3D" id="2.60.34.10">
    <property type="entry name" value="Substrate Binding Domain Of DNAk, Chain A, domain 1"/>
    <property type="match status" value="1"/>
</dbReference>
<dbReference type="InterPro" id="IPR043129">
    <property type="entry name" value="ATPase_NBD"/>
</dbReference>
<dbReference type="InterPro" id="IPR018181">
    <property type="entry name" value="Heat_shock_70_CS"/>
</dbReference>
<dbReference type="InterPro" id="IPR029048">
    <property type="entry name" value="HSP70_C_sf"/>
</dbReference>
<dbReference type="InterPro" id="IPR029047">
    <property type="entry name" value="HSP70_peptide-bd_sf"/>
</dbReference>
<dbReference type="InterPro" id="IPR013126">
    <property type="entry name" value="Hsp_70_fam"/>
</dbReference>
<dbReference type="NCBIfam" id="NF001413">
    <property type="entry name" value="PRK00290.1"/>
    <property type="match status" value="1"/>
</dbReference>
<dbReference type="PANTHER" id="PTHR19375">
    <property type="entry name" value="HEAT SHOCK PROTEIN 70KDA"/>
    <property type="match status" value="1"/>
</dbReference>
<dbReference type="Pfam" id="PF00012">
    <property type="entry name" value="HSP70"/>
    <property type="match status" value="1"/>
</dbReference>
<dbReference type="PRINTS" id="PR00301">
    <property type="entry name" value="HEATSHOCK70"/>
</dbReference>
<dbReference type="SUPFAM" id="SSF53067">
    <property type="entry name" value="Actin-like ATPase domain"/>
    <property type="match status" value="2"/>
</dbReference>
<dbReference type="SUPFAM" id="SSF100934">
    <property type="entry name" value="Heat shock protein 70kD (HSP70), C-terminal subdomain"/>
    <property type="match status" value="1"/>
</dbReference>
<dbReference type="SUPFAM" id="SSF100920">
    <property type="entry name" value="Heat shock protein 70kD (HSP70), peptide-binding domain"/>
    <property type="match status" value="1"/>
</dbReference>
<dbReference type="PROSITE" id="PS00297">
    <property type="entry name" value="HSP70_1"/>
    <property type="match status" value="1"/>
</dbReference>
<dbReference type="PROSITE" id="PS00329">
    <property type="entry name" value="HSP70_2"/>
    <property type="match status" value="1"/>
</dbReference>
<dbReference type="PROSITE" id="PS01036">
    <property type="entry name" value="HSP70_3"/>
    <property type="match status" value="1"/>
</dbReference>
<evidence type="ECO:0000256" key="1">
    <source>
        <dbReference type="SAM" id="MobiDB-lite"/>
    </source>
</evidence>
<evidence type="ECO:0000305" key="2"/>
<accession>Q24789</accession>
<feature type="chain" id="PRO_0000078315" description="Heat shock cognate 70 kDa protein">
    <location>
        <begin position="1"/>
        <end position="665"/>
    </location>
</feature>
<feature type="region of interest" description="Disordered" evidence="1">
    <location>
        <begin position="629"/>
        <end position="665"/>
    </location>
</feature>
<feature type="compositionally biased region" description="Gly residues" evidence="1">
    <location>
        <begin position="629"/>
        <end position="658"/>
    </location>
</feature>
<sequence>MMSKGPAVGIDLGTTFSCVGVFQHGKVEIIANDQGNRTTPSYVAFTDTERLIGDAAKNQVAMNPTNTVFDAKRLIGRRFDDRAVQDDIKHWAFKVINAGGKPKIEVEYRGETKCFSAEEISSMVLLKMKETAEAYLGKKVSDTVISVPAYFNDSQRQATKDAGTISGLNVLRIINEPTAAAIAYGLDKKVERERNVLIFDLGGGTFDVSILSIEDGIFEVKSTAGDTHLGGEDFDSRLVNHFVEEFKRKHKGKDLTTNKRAVRRLRTACERAKRTLSSSAQANIEIDSLLEGIDFYTSITRARFEELCSDLFRSTLDPVEKALRDAKLDKGAVHEIVLVGGSTRIPKVQKLLQDFFNGRELNKSINPDEAVAYGAAVQAAILTGDKSEAVQDLLLLDVAPLSLGLETAGGVMTALIKRNTTIPTKQTQTFTTYSDNQPGVLIQVYEGERAMKRDNNLLGKFELSGIPPGPRGVPQIEVTFDIDANGILNVSAVDKSTGKQNKITITRDKGRLSKEEIERMVNDAEKFKQEDEKQRDRVAAKNGLESYAFSMKSTVEDEKVKEKIGESDRRRIMEKCEETVKWLDGNQQAEKEEYEHRQKELESVCNPIIAKMYQEAGGVGGIPGGIPGGGMPGGTPGGGIPAGMAGGMSGDPSSGGRGPTIEEVD</sequence>
<reference key="1">
    <citation type="submission" date="1995-05" db="EMBL/GenBank/DDBJ databases">
        <title>Cloning and sequencing of hsp70 cDNA in Echinococcus granulosus.</title>
        <authorList>
            <person name="Colebrook A.L."/>
            <person name="Lightowlers M.W."/>
        </authorList>
    </citation>
    <scope>NUCLEOTIDE SEQUENCE [MRNA]</scope>
</reference>
<gene>
    <name type="primary">HSP70</name>
</gene>
<protein>
    <recommendedName>
        <fullName>Heat shock cognate 70 kDa protein</fullName>
        <shortName>HSP70</shortName>
    </recommendedName>
</protein>
<comment type="similarity">
    <text evidence="2">Belongs to the heat shock protein 70 family.</text>
</comment>
<keyword id="KW-0067">ATP-binding</keyword>
<keyword id="KW-0547">Nucleotide-binding</keyword>
<keyword id="KW-0346">Stress response</keyword>
<name>HSP70_ECHGR</name>
<organism>
    <name type="scientific">Echinococcus granulosus</name>
    <name type="common">Hydatid tapeworm</name>
    <dbReference type="NCBI Taxonomy" id="6210"/>
    <lineage>
        <taxon>Eukaryota</taxon>
        <taxon>Metazoa</taxon>
        <taxon>Spiralia</taxon>
        <taxon>Lophotrochozoa</taxon>
        <taxon>Platyhelminthes</taxon>
        <taxon>Cestoda</taxon>
        <taxon>Eucestoda</taxon>
        <taxon>Cyclophyllidea</taxon>
        <taxon>Taeniidae</taxon>
        <taxon>Echinococcus</taxon>
        <taxon>Echinococcus granulosus group</taxon>
    </lineage>
</organism>